<keyword id="KW-0002">3D-structure</keyword>
<keyword id="KW-0929">Antimicrobial</keyword>
<keyword id="KW-0081">Bacteriolytic enzyme</keyword>
<keyword id="KW-0903">Direct protein sequencing</keyword>
<keyword id="KW-1015">Disulfide bond</keyword>
<keyword id="KW-0326">Glycosidase</keyword>
<keyword id="KW-0378">Hydrolase</keyword>
<keyword id="KW-0964">Secreted</keyword>
<keyword id="KW-0732">Signal</keyword>
<accession>P00719</accession>
<accession>G3XDE1</accession>
<evidence type="ECO:0000250" key="1"/>
<evidence type="ECO:0000269" key="2">
    <source>
    </source>
</evidence>
<evidence type="ECO:0000269" key="3">
    <source>
    </source>
</evidence>
<evidence type="ECO:0000269" key="4">
    <source>
    </source>
</evidence>
<evidence type="ECO:0000305" key="5"/>
<evidence type="ECO:0007829" key="6">
    <source>
        <dbReference type="PDB" id="3WYH"/>
    </source>
</evidence>
<feature type="signal peptide" evidence="3 4">
    <location>
        <begin position="1"/>
        <end position="19"/>
    </location>
</feature>
<feature type="chain" id="PRO_0000193516" description="Lysozyme g">
    <location>
        <begin position="20"/>
        <end position="204"/>
    </location>
</feature>
<feature type="active site" evidence="1">
    <location>
        <position position="92"/>
    </location>
</feature>
<feature type="active site" evidence="1">
    <location>
        <position position="105"/>
    </location>
</feature>
<feature type="disulfide bond" evidence="1">
    <location>
        <begin position="23"/>
        <end position="79"/>
    </location>
</feature>
<feature type="disulfide bond" evidence="1">
    <location>
        <begin position="37"/>
        <end position="48"/>
    </location>
</feature>
<feature type="strand" evidence="6">
    <location>
        <begin position="22"/>
        <end position="24"/>
    </location>
</feature>
<feature type="helix" evidence="6">
    <location>
        <begin position="27"/>
        <end position="29"/>
    </location>
</feature>
<feature type="helix" evidence="6">
    <location>
        <begin position="37"/>
        <end position="40"/>
    </location>
</feature>
<feature type="helix" evidence="6">
    <location>
        <begin position="41"/>
        <end position="43"/>
    </location>
</feature>
<feature type="helix" evidence="6">
    <location>
        <begin position="50"/>
        <end position="65"/>
    </location>
</feature>
<feature type="helix" evidence="6">
    <location>
        <begin position="68"/>
        <end position="78"/>
    </location>
</feature>
<feature type="helix" evidence="6">
    <location>
        <begin position="82"/>
        <end position="93"/>
    </location>
</feature>
<feature type="turn" evidence="6">
    <location>
        <begin position="94"/>
        <end position="98"/>
    </location>
</feature>
<feature type="turn" evidence="6">
    <location>
        <begin position="105"/>
        <end position="108"/>
    </location>
</feature>
<feature type="turn" evidence="6">
    <location>
        <begin position="111"/>
        <end position="114"/>
    </location>
</feature>
<feature type="turn" evidence="6">
    <location>
        <begin position="117"/>
        <end position="119"/>
    </location>
</feature>
<feature type="helix" evidence="6">
    <location>
        <begin position="129"/>
        <end position="149"/>
    </location>
</feature>
<feature type="helix" evidence="6">
    <location>
        <begin position="155"/>
        <end position="168"/>
    </location>
</feature>
<feature type="helix" evidence="6">
    <location>
        <begin position="170"/>
        <end position="172"/>
    </location>
</feature>
<feature type="turn" evidence="6">
    <location>
        <begin position="177"/>
        <end position="182"/>
    </location>
</feature>
<feature type="helix" evidence="6">
    <location>
        <begin position="184"/>
        <end position="186"/>
    </location>
</feature>
<feature type="helix" evidence="6">
    <location>
        <begin position="188"/>
        <end position="199"/>
    </location>
</feature>
<feature type="turn" evidence="6">
    <location>
        <begin position="200"/>
        <end position="203"/>
    </location>
</feature>
<organism>
    <name type="scientific">Struthio camelus</name>
    <name type="common">Common ostrich</name>
    <dbReference type="NCBI Taxonomy" id="8801"/>
    <lineage>
        <taxon>Eukaryota</taxon>
        <taxon>Metazoa</taxon>
        <taxon>Chordata</taxon>
        <taxon>Craniata</taxon>
        <taxon>Vertebrata</taxon>
        <taxon>Euteleostomi</taxon>
        <taxon>Archelosauria</taxon>
        <taxon>Archosauria</taxon>
        <taxon>Dinosauria</taxon>
        <taxon>Saurischia</taxon>
        <taxon>Theropoda</taxon>
        <taxon>Coelurosauria</taxon>
        <taxon>Aves</taxon>
        <taxon>Palaeognathae</taxon>
        <taxon>Struthioniformes</taxon>
        <taxon>Struthionidae</taxon>
        <taxon>Struthio</taxon>
    </lineage>
</organism>
<sequence length="204" mass="22514">MHLMLVLLGLAALLGTSQSRTGCYGDVNRVDTTGASCKSAKPEKLNYCGVAASRKIAERDLQSMDRYKALIKKVGQKLCVDPAVIAGIISRESHAGKALRNGWGDNGNGFGLMQVDRRSHKPVGEWNGERHLMQGTEILISMIKAIQKKFPRWTKEQQLKGGISAYNAGPGNVRSYERMDIGTTHDDYANDVVARAQYYKQHGY</sequence>
<name>LYG_STRCA</name>
<reference key="1">
    <citation type="journal article" date="2012" name="Gene">
        <title>Molecular characterization of goose- and chicken-type lysozymes in emu (Dromaius novaehollandiae): evidence for extremely low lysozyme levels in emu egg white.</title>
        <authorList>
            <person name="Maehashi K."/>
            <person name="Matano M."/>
            <person name="Irisawa T."/>
            <person name="Uchino M."/>
            <person name="Kashiwagi Y."/>
            <person name="Watanabe T."/>
        </authorList>
    </citation>
    <scope>NUCLEOTIDE SEQUENCE [GENOMIC DNA]</scope>
    <scope>FUNCTION</scope>
    <source>
        <tissue>Muscle</tissue>
    </source>
</reference>
<reference key="2">
    <citation type="journal article" date="1982" name="Eur. J. Biochem.">
        <title>Complete amino acid sequence of ostrich (Struthio camelus) egg-white lysozyme, a goose-type lysozyme.</title>
        <authorList>
            <person name="Schoentgen F."/>
            <person name="Jolles J."/>
            <person name="Jolles P."/>
        </authorList>
    </citation>
    <scope>PROTEIN SEQUENCE OF 20-204</scope>
    <source>
        <tissue>Egg white</tissue>
    </source>
</reference>
<reference key="3">
    <citation type="journal article" date="1977" name="Mol. Cell. Biochem.">
        <title>The ostrich (Struthio camelus) egg-white lysozyme.</title>
        <authorList>
            <person name="Jolles J."/>
            <person name="Perin J.-P."/>
            <person name="Jolles P."/>
        </authorList>
    </citation>
    <scope>PROTEIN SEQUENCE OF 20-53</scope>
    <source>
        <tissue>Egg white</tissue>
    </source>
</reference>
<protein>
    <recommendedName>
        <fullName>Lysozyme g</fullName>
        <ecNumber>3.2.1.17</ecNumber>
    </recommendedName>
    <alternativeName>
        <fullName>1,4-beta-N-acetylmuramidase</fullName>
    </alternativeName>
    <alternativeName>
        <fullName>Goose-type lysozyme</fullName>
    </alternativeName>
</protein>
<dbReference type="EC" id="3.2.1.17"/>
<dbReference type="EMBL" id="AB469329">
    <property type="protein sequence ID" value="BAL03620.1"/>
    <property type="molecule type" value="Genomic_DNA"/>
</dbReference>
<dbReference type="PIR" id="A00874">
    <property type="entry name" value="LZOSG"/>
</dbReference>
<dbReference type="RefSeq" id="XP_009664638.1">
    <property type="nucleotide sequence ID" value="XM_009666343.2"/>
</dbReference>
<dbReference type="PDB" id="3WYH">
    <property type="method" value="X-ray"/>
    <property type="resolution" value="1.77 A"/>
    <property type="chains" value="A/B=20-204"/>
</dbReference>
<dbReference type="PDBsum" id="3WYH"/>
<dbReference type="BMRB" id="P00719"/>
<dbReference type="SMR" id="P00719"/>
<dbReference type="CAZy" id="GH23">
    <property type="family name" value="Glycoside Hydrolase Family 23"/>
</dbReference>
<dbReference type="GeneID" id="104138656"/>
<dbReference type="KEGG" id="scam:104138656"/>
<dbReference type="EvolutionaryTrace" id="P00719"/>
<dbReference type="GO" id="GO:0005576">
    <property type="term" value="C:extracellular region"/>
    <property type="evidence" value="ECO:0007669"/>
    <property type="project" value="UniProtKB-SubCell"/>
</dbReference>
<dbReference type="GO" id="GO:0003796">
    <property type="term" value="F:lysozyme activity"/>
    <property type="evidence" value="ECO:0007669"/>
    <property type="project" value="UniProtKB-EC"/>
</dbReference>
<dbReference type="GO" id="GO:0050830">
    <property type="term" value="P:defense response to Gram-positive bacterium"/>
    <property type="evidence" value="ECO:0007669"/>
    <property type="project" value="TreeGrafter"/>
</dbReference>
<dbReference type="GO" id="GO:0031640">
    <property type="term" value="P:killing of cells of another organism"/>
    <property type="evidence" value="ECO:0007669"/>
    <property type="project" value="UniProtKB-KW"/>
</dbReference>
<dbReference type="GO" id="GO:0009253">
    <property type="term" value="P:peptidoglycan catabolic process"/>
    <property type="evidence" value="ECO:0007669"/>
    <property type="project" value="InterPro"/>
</dbReference>
<dbReference type="CDD" id="cd01021">
    <property type="entry name" value="GEWL"/>
    <property type="match status" value="1"/>
</dbReference>
<dbReference type="FunFam" id="1.10.530.10:FF:000026">
    <property type="entry name" value="Lysozyme g"/>
    <property type="match status" value="1"/>
</dbReference>
<dbReference type="Gene3D" id="1.10.530.10">
    <property type="match status" value="1"/>
</dbReference>
<dbReference type="InterPro" id="IPR002152">
    <property type="entry name" value="Glyco_hydro_23"/>
</dbReference>
<dbReference type="InterPro" id="IPR023346">
    <property type="entry name" value="Lysozyme-like_dom_sf"/>
</dbReference>
<dbReference type="InterPro" id="IPR008258">
    <property type="entry name" value="Transglycosylase_SLT_dom_1"/>
</dbReference>
<dbReference type="PANTHER" id="PTHR31698">
    <property type="entry name" value="LYSOZYME G FAMILY MEMBER"/>
    <property type="match status" value="1"/>
</dbReference>
<dbReference type="PANTHER" id="PTHR31698:SF8">
    <property type="entry name" value="LYSOZYME G-RELATED"/>
    <property type="match status" value="1"/>
</dbReference>
<dbReference type="Pfam" id="PF01464">
    <property type="entry name" value="SLT"/>
    <property type="match status" value="1"/>
</dbReference>
<dbReference type="PIRSF" id="PIRSF001065">
    <property type="entry name" value="Lysozyme_g"/>
    <property type="match status" value="1"/>
</dbReference>
<dbReference type="PRINTS" id="PR00749">
    <property type="entry name" value="LYSOZYMEG"/>
</dbReference>
<dbReference type="SUPFAM" id="SSF53955">
    <property type="entry name" value="Lysozyme-like"/>
    <property type="match status" value="1"/>
</dbReference>
<comment type="function">
    <text evidence="2">Has bacteriolytic activity against M.luteus.</text>
</comment>
<comment type="catalytic activity">
    <reaction>
        <text>Hydrolysis of (1-&gt;4)-beta-linkages between N-acetylmuramic acid and N-acetyl-D-glucosamine residues in a peptidoglycan and between N-acetyl-D-glucosamine residues in chitodextrins.</text>
        <dbReference type="EC" id="3.2.1.17"/>
    </reaction>
</comment>
<comment type="subcellular location">
    <subcellularLocation>
        <location>Secreted</location>
    </subcellularLocation>
</comment>
<comment type="miscellaneous">
    <text>Shows preference for N-acetylmuramic acid residues that are substituted with a peptide moiety. It acts only as a glycanohydrolase.</text>
</comment>
<comment type="similarity">
    <text evidence="5">Belongs to the glycosyl hydrolase 23 family.</text>
</comment>
<proteinExistence type="evidence at protein level"/>